<protein>
    <recommendedName>
        <fullName>Probable G-protein coupled receptor 132</fullName>
    </recommendedName>
    <alternativeName>
        <fullName>G2 accumulation protein</fullName>
    </alternativeName>
</protein>
<comment type="function">
    <text evidence="5 6 7">May be a receptor for oxidized free fatty acids derived from linoleic and arachidonic acids such as 9-hydroxyoctadecadienoic acid (9-HODE). Activates a G alpha protein, most likely G alpha(q). May be involved in apoptosis. Functions at the G2/M checkpoint to delay mitosis. May function as a sensor that monitors the oxidative states and mediates appropriate cellular responses such as secretion of paracrine signals and attenuation of proliferation. May mediate ths accumulation of intracellular inositol phosphates at acidic pH through proton-sensing activity.</text>
</comment>
<comment type="subcellular location">
    <subcellularLocation>
        <location evidence="12">Cell membrane</location>
        <topology evidence="12">Multi-pass membrane protein</topology>
    </subcellularLocation>
    <text evidence="1">Internalized and accumulated in endosomal compartments. LPC triggers the relocalization from the endosomal compartment to the cell surface (By similarity).</text>
</comment>
<comment type="alternative products">
    <event type="alternative splicing"/>
    <isoform>
        <id>Q9UNW8-1</id>
        <name>1</name>
        <name>G2A-a</name>
        <sequence type="displayed"/>
    </isoform>
    <isoform>
        <id>Q9UNW8-2</id>
        <name>2</name>
        <sequence type="described" ref="VSP_008404"/>
    </isoform>
    <isoform>
        <id>Q9UNW8-3</id>
        <name>3</name>
        <name>G2A-b</name>
        <sequence type="described" ref="VSP_054592"/>
    </isoform>
</comment>
<comment type="tissue specificity">
    <text evidence="4">Highly expressed in macrophages and hematopoietic tissues rich in lymphocytes, like spleen and thymus. Weakly expressed in heart and lung. In atherosclerotic plaques, expression is observed around the lipid core and at the shoulder region.</text>
</comment>
<comment type="induction">
    <text evidence="7">By stress and DNA-damaging agents.</text>
</comment>
<comment type="miscellaneous">
    <molecule>Isoform 3</molecule>
    <text evidence="12">More abundant than isoform 1 in leukocytes by approximately 3-fold.</text>
</comment>
<comment type="similarity">
    <text evidence="3">Belongs to the G-protein coupled receptor 1 family.</text>
</comment>
<comment type="caution">
    <text evidence="13">Was originally thought to be a receptor for lysophosphatidylcholine (LPC) and sphingosylphosphorylcholine (SPC), However, this work has been retracted.</text>
</comment>
<organism>
    <name type="scientific">Homo sapiens</name>
    <name type="common">Human</name>
    <dbReference type="NCBI Taxonomy" id="9606"/>
    <lineage>
        <taxon>Eukaryota</taxon>
        <taxon>Metazoa</taxon>
        <taxon>Chordata</taxon>
        <taxon>Craniata</taxon>
        <taxon>Vertebrata</taxon>
        <taxon>Euteleostomi</taxon>
        <taxon>Mammalia</taxon>
        <taxon>Eutheria</taxon>
        <taxon>Euarchontoglires</taxon>
        <taxon>Primates</taxon>
        <taxon>Haplorrhini</taxon>
        <taxon>Catarrhini</taxon>
        <taxon>Hominidae</taxon>
        <taxon>Homo</taxon>
    </lineage>
</organism>
<proteinExistence type="evidence at protein level"/>
<evidence type="ECO:0000250" key="1"/>
<evidence type="ECO:0000255" key="2"/>
<evidence type="ECO:0000255" key="3">
    <source>
        <dbReference type="PROSITE-ProRule" id="PRU00521"/>
    </source>
</evidence>
<evidence type="ECO:0000269" key="4">
    <source>
    </source>
</evidence>
<evidence type="ECO:0000269" key="5">
    <source>
    </source>
</evidence>
<evidence type="ECO:0000269" key="6">
    <source>
    </source>
</evidence>
<evidence type="ECO:0000269" key="7">
    <source>
    </source>
</evidence>
<evidence type="ECO:0000303" key="8">
    <source>
    </source>
</evidence>
<evidence type="ECO:0000303" key="9">
    <source>
    </source>
</evidence>
<evidence type="ECO:0000303" key="10">
    <source>
    </source>
</evidence>
<evidence type="ECO:0000303" key="11">
    <source ref="4"/>
</evidence>
<evidence type="ECO:0000305" key="12"/>
<evidence type="ECO:0000305" key="13">
    <source>
    </source>
</evidence>
<evidence type="ECO:0007829" key="14">
    <source>
        <dbReference type="PDB" id="8HQE"/>
    </source>
</evidence>
<evidence type="ECO:0007829" key="15">
    <source>
        <dbReference type="PDB" id="8HQM"/>
    </source>
</evidence>
<reference key="1">
    <citation type="journal article" date="1998" name="Proc. Natl. Acad. Sci. U.S.A.">
        <title>A DNA damage and stress inducible G protein-coupled receptor blocks cells in G2/M.</title>
        <authorList>
            <person name="Weng Z."/>
            <person name="Fluckiger A.-C."/>
            <person name="Nisitani S."/>
            <person name="Wahl M.I."/>
            <person name="Le L.Q."/>
            <person name="Hunter C.A."/>
            <person name="Fernal A.A."/>
            <person name="Le Beau M.M."/>
            <person name="Witte O.N."/>
        </authorList>
    </citation>
    <scope>NUCLEOTIDE SEQUENCE [MRNA] (ISOFORM 1)</scope>
    <scope>FUNCTION</scope>
    <scope>INDUCTION</scope>
    <source>
        <tissue>Spleen</tissue>
    </source>
</reference>
<reference key="2">
    <citation type="journal article" date="2010" name="J. Pharmacol. Exp. Ther.">
        <title>Identification and analysis of two splice variants of human G2A generated by alternative splicing.</title>
        <authorList>
            <person name="Ogawa A."/>
            <person name="Obinata H."/>
            <person name="Hattori T."/>
            <person name="Kishi M."/>
            <person name="Tatei K."/>
            <person name="Ishikawa O."/>
            <person name="Izumi T."/>
        </authorList>
    </citation>
    <scope>NUCLEOTIDE SEQUENCE [MRNA] (ISOFORMS 1 AND 3)</scope>
    <scope>FUNCTION</scope>
    <scope>ALTERNATIVE SPLICING</scope>
    <scope>MUTAGENESIS OF LYS-7; LYS-31 AND ARG-42</scope>
</reference>
<reference key="3">
    <citation type="submission" date="2007-12" db="EMBL/GenBank/DDBJ databases">
        <authorList>
            <person name="Kaighin V.A."/>
            <person name="Martin A.L."/>
            <person name="Aronstam R.S."/>
        </authorList>
    </citation>
    <scope>NUCLEOTIDE SEQUENCE [MRNA] (ISOFORM 1)</scope>
    <source>
        <tissue>Lung</tissue>
    </source>
</reference>
<reference key="4">
    <citation type="submission" date="2003-05" db="EMBL/GenBank/DDBJ databases">
        <title>Cloning of human full-length CDSs in BD Creator(TM) system donor vector.</title>
        <authorList>
            <person name="Kalnine N."/>
            <person name="Chen X."/>
            <person name="Rolfs A."/>
            <person name="Halleck A."/>
            <person name="Hines L."/>
            <person name="Eisenstein S."/>
            <person name="Koundinya M."/>
            <person name="Raphael J."/>
            <person name="Moreira D."/>
            <person name="Kelley T."/>
            <person name="LaBaer J."/>
            <person name="Lin Y."/>
            <person name="Phelan M."/>
            <person name="Farmer A."/>
        </authorList>
    </citation>
    <scope>NUCLEOTIDE SEQUENCE [LARGE SCALE MRNA] (ISOFORM 2)</scope>
</reference>
<reference key="5">
    <citation type="journal article" date="2004" name="Nat. Genet.">
        <title>Complete sequencing and characterization of 21,243 full-length human cDNAs.</title>
        <authorList>
            <person name="Ota T."/>
            <person name="Suzuki Y."/>
            <person name="Nishikawa T."/>
            <person name="Otsuki T."/>
            <person name="Sugiyama T."/>
            <person name="Irie R."/>
            <person name="Wakamatsu A."/>
            <person name="Hayashi K."/>
            <person name="Sato H."/>
            <person name="Nagai K."/>
            <person name="Kimura K."/>
            <person name="Makita H."/>
            <person name="Sekine M."/>
            <person name="Obayashi M."/>
            <person name="Nishi T."/>
            <person name="Shibahara T."/>
            <person name="Tanaka T."/>
            <person name="Ishii S."/>
            <person name="Yamamoto J."/>
            <person name="Saito K."/>
            <person name="Kawai Y."/>
            <person name="Isono Y."/>
            <person name="Nakamura Y."/>
            <person name="Nagahari K."/>
            <person name="Murakami K."/>
            <person name="Yasuda T."/>
            <person name="Iwayanagi T."/>
            <person name="Wagatsuma M."/>
            <person name="Shiratori A."/>
            <person name="Sudo H."/>
            <person name="Hosoiri T."/>
            <person name="Kaku Y."/>
            <person name="Kodaira H."/>
            <person name="Kondo H."/>
            <person name="Sugawara M."/>
            <person name="Takahashi M."/>
            <person name="Kanda K."/>
            <person name="Yokoi T."/>
            <person name="Furuya T."/>
            <person name="Kikkawa E."/>
            <person name="Omura Y."/>
            <person name="Abe K."/>
            <person name="Kamihara K."/>
            <person name="Katsuta N."/>
            <person name="Sato K."/>
            <person name="Tanikawa M."/>
            <person name="Yamazaki M."/>
            <person name="Ninomiya K."/>
            <person name="Ishibashi T."/>
            <person name="Yamashita H."/>
            <person name="Murakawa K."/>
            <person name="Fujimori K."/>
            <person name="Tanai H."/>
            <person name="Kimata M."/>
            <person name="Watanabe M."/>
            <person name="Hiraoka S."/>
            <person name="Chiba Y."/>
            <person name="Ishida S."/>
            <person name="Ono Y."/>
            <person name="Takiguchi S."/>
            <person name="Watanabe S."/>
            <person name="Yosida M."/>
            <person name="Hotuta T."/>
            <person name="Kusano J."/>
            <person name="Kanehori K."/>
            <person name="Takahashi-Fujii A."/>
            <person name="Hara H."/>
            <person name="Tanase T.-O."/>
            <person name="Nomura Y."/>
            <person name="Togiya S."/>
            <person name="Komai F."/>
            <person name="Hara R."/>
            <person name="Takeuchi K."/>
            <person name="Arita M."/>
            <person name="Imose N."/>
            <person name="Musashino K."/>
            <person name="Yuuki H."/>
            <person name="Oshima A."/>
            <person name="Sasaki N."/>
            <person name="Aotsuka S."/>
            <person name="Yoshikawa Y."/>
            <person name="Matsunawa H."/>
            <person name="Ichihara T."/>
            <person name="Shiohata N."/>
            <person name="Sano S."/>
            <person name="Moriya S."/>
            <person name="Momiyama H."/>
            <person name="Satoh N."/>
            <person name="Takami S."/>
            <person name="Terashima Y."/>
            <person name="Suzuki O."/>
            <person name="Nakagawa S."/>
            <person name="Senoh A."/>
            <person name="Mizoguchi H."/>
            <person name="Goto Y."/>
            <person name="Shimizu F."/>
            <person name="Wakebe H."/>
            <person name="Hishigaki H."/>
            <person name="Watanabe T."/>
            <person name="Sugiyama A."/>
            <person name="Takemoto M."/>
            <person name="Kawakami B."/>
            <person name="Yamazaki M."/>
            <person name="Watanabe K."/>
            <person name="Kumagai A."/>
            <person name="Itakura S."/>
            <person name="Fukuzumi Y."/>
            <person name="Fujimori Y."/>
            <person name="Komiyama M."/>
            <person name="Tashiro H."/>
            <person name="Tanigami A."/>
            <person name="Fujiwara T."/>
            <person name="Ono T."/>
            <person name="Yamada K."/>
            <person name="Fujii Y."/>
            <person name="Ozaki K."/>
            <person name="Hirao M."/>
            <person name="Ohmori Y."/>
            <person name="Kawabata A."/>
            <person name="Hikiji T."/>
            <person name="Kobatake N."/>
            <person name="Inagaki H."/>
            <person name="Ikema Y."/>
            <person name="Okamoto S."/>
            <person name="Okitani R."/>
            <person name="Kawakami T."/>
            <person name="Noguchi S."/>
            <person name="Itoh T."/>
            <person name="Shigeta K."/>
            <person name="Senba T."/>
            <person name="Matsumura K."/>
            <person name="Nakajima Y."/>
            <person name="Mizuno T."/>
            <person name="Morinaga M."/>
            <person name="Sasaki M."/>
            <person name="Togashi T."/>
            <person name="Oyama M."/>
            <person name="Hata H."/>
            <person name="Watanabe M."/>
            <person name="Komatsu T."/>
            <person name="Mizushima-Sugano J."/>
            <person name="Satoh T."/>
            <person name="Shirai Y."/>
            <person name="Takahashi Y."/>
            <person name="Nakagawa K."/>
            <person name="Okumura K."/>
            <person name="Nagase T."/>
            <person name="Nomura N."/>
            <person name="Kikuchi H."/>
            <person name="Masuho Y."/>
            <person name="Yamashita R."/>
            <person name="Nakai K."/>
            <person name="Yada T."/>
            <person name="Nakamura Y."/>
            <person name="Ohara O."/>
            <person name="Isogai T."/>
            <person name="Sugano S."/>
        </authorList>
    </citation>
    <scope>NUCLEOTIDE SEQUENCE [LARGE SCALE MRNA] (ISOFORMS 1 AND 3)</scope>
    <source>
        <tissue>Synovium</tissue>
        <tissue>Thymus</tissue>
    </source>
</reference>
<reference key="6">
    <citation type="journal article" date="2003" name="Nature">
        <title>The DNA sequence and analysis of human chromosome 14.</title>
        <authorList>
            <person name="Heilig R."/>
            <person name="Eckenberg R."/>
            <person name="Petit J.-L."/>
            <person name="Fonknechten N."/>
            <person name="Da Silva C."/>
            <person name="Cattolico L."/>
            <person name="Levy M."/>
            <person name="Barbe V."/>
            <person name="De Berardinis V."/>
            <person name="Ureta-Vidal A."/>
            <person name="Pelletier E."/>
            <person name="Vico V."/>
            <person name="Anthouard V."/>
            <person name="Rowen L."/>
            <person name="Madan A."/>
            <person name="Qin S."/>
            <person name="Sun H."/>
            <person name="Du H."/>
            <person name="Pepin K."/>
            <person name="Artiguenave F."/>
            <person name="Robert C."/>
            <person name="Cruaud C."/>
            <person name="Bruels T."/>
            <person name="Jaillon O."/>
            <person name="Friedlander L."/>
            <person name="Samson G."/>
            <person name="Brottier P."/>
            <person name="Cure S."/>
            <person name="Segurens B."/>
            <person name="Aniere F."/>
            <person name="Samain S."/>
            <person name="Crespeau H."/>
            <person name="Abbasi N."/>
            <person name="Aiach N."/>
            <person name="Boscus D."/>
            <person name="Dickhoff R."/>
            <person name="Dors M."/>
            <person name="Dubois I."/>
            <person name="Friedman C."/>
            <person name="Gouyvenoux M."/>
            <person name="James R."/>
            <person name="Madan A."/>
            <person name="Mairey-Estrada B."/>
            <person name="Mangenot S."/>
            <person name="Martins N."/>
            <person name="Menard M."/>
            <person name="Oztas S."/>
            <person name="Ratcliffe A."/>
            <person name="Shaffer T."/>
            <person name="Trask B."/>
            <person name="Vacherie B."/>
            <person name="Bellemere C."/>
            <person name="Belser C."/>
            <person name="Besnard-Gonnet M."/>
            <person name="Bartol-Mavel D."/>
            <person name="Boutard M."/>
            <person name="Briez-Silla S."/>
            <person name="Combette S."/>
            <person name="Dufosse-Laurent V."/>
            <person name="Ferron C."/>
            <person name="Lechaplais C."/>
            <person name="Louesse C."/>
            <person name="Muselet D."/>
            <person name="Magdelenat G."/>
            <person name="Pateau E."/>
            <person name="Petit E."/>
            <person name="Sirvain-Trukniewicz P."/>
            <person name="Trybou A."/>
            <person name="Vega-Czarny N."/>
            <person name="Bataille E."/>
            <person name="Bluet E."/>
            <person name="Bordelais I."/>
            <person name="Dubois M."/>
            <person name="Dumont C."/>
            <person name="Guerin T."/>
            <person name="Haffray S."/>
            <person name="Hammadi R."/>
            <person name="Muanga J."/>
            <person name="Pellouin V."/>
            <person name="Robert D."/>
            <person name="Wunderle E."/>
            <person name="Gauguet G."/>
            <person name="Roy A."/>
            <person name="Sainte-Marthe L."/>
            <person name="Verdier J."/>
            <person name="Verdier-Discala C."/>
            <person name="Hillier L.W."/>
            <person name="Fulton L."/>
            <person name="McPherson J."/>
            <person name="Matsuda F."/>
            <person name="Wilson R."/>
            <person name="Scarpelli C."/>
            <person name="Gyapay G."/>
            <person name="Wincker P."/>
            <person name="Saurin W."/>
            <person name="Quetier F."/>
            <person name="Waterston R."/>
            <person name="Hood L."/>
            <person name="Weissenbach J."/>
        </authorList>
    </citation>
    <scope>NUCLEOTIDE SEQUENCE [LARGE SCALE GENOMIC DNA]</scope>
</reference>
<reference key="7">
    <citation type="submission" date="2005-07" db="EMBL/GenBank/DDBJ databases">
        <authorList>
            <person name="Mural R.J."/>
            <person name="Istrail S."/>
            <person name="Sutton G."/>
            <person name="Florea L."/>
            <person name="Halpern A.L."/>
            <person name="Mobarry C.M."/>
            <person name="Lippert R."/>
            <person name="Walenz B."/>
            <person name="Shatkay H."/>
            <person name="Dew I."/>
            <person name="Miller J.R."/>
            <person name="Flanigan M.J."/>
            <person name="Edwards N.J."/>
            <person name="Bolanos R."/>
            <person name="Fasulo D."/>
            <person name="Halldorsson B.V."/>
            <person name="Hannenhalli S."/>
            <person name="Turner R."/>
            <person name="Yooseph S."/>
            <person name="Lu F."/>
            <person name="Nusskern D.R."/>
            <person name="Shue B.C."/>
            <person name="Zheng X.H."/>
            <person name="Zhong F."/>
            <person name="Delcher A.L."/>
            <person name="Huson D.H."/>
            <person name="Kravitz S.A."/>
            <person name="Mouchard L."/>
            <person name="Reinert K."/>
            <person name="Remington K.A."/>
            <person name="Clark A.G."/>
            <person name="Waterman M.S."/>
            <person name="Eichler E.E."/>
            <person name="Adams M.D."/>
            <person name="Hunkapiller M.W."/>
            <person name="Myers E.W."/>
            <person name="Venter J.C."/>
        </authorList>
    </citation>
    <scope>NUCLEOTIDE SEQUENCE [LARGE SCALE GENOMIC DNA]</scope>
</reference>
<reference key="8">
    <citation type="journal article" date="2004" name="Genome Res.">
        <title>The status, quality, and expansion of the NIH full-length cDNA project: the Mammalian Gene Collection (MGC).</title>
        <authorList>
            <consortium name="The MGC Project Team"/>
        </authorList>
    </citation>
    <scope>NUCLEOTIDE SEQUENCE [LARGE SCALE MRNA] (ISOFORMS 1 AND 2)</scope>
    <source>
        <tissue>B-cell</tissue>
        <tissue>Brain</tissue>
    </source>
</reference>
<reference key="9">
    <citation type="journal article" date="2001" name="Science">
        <title>Lysophosphatidylcholine as a ligand for the immunoregulatory receptor G2A.</title>
        <authorList>
            <person name="Kabarowski J.H.S."/>
            <person name="Zhu K."/>
            <person name="Le L.Q."/>
            <person name="Witte O.N."/>
            <person name="Xu Y."/>
        </authorList>
    </citation>
    <scope>RETRACTED PAPER</scope>
</reference>
<reference key="10">
    <citation type="journal article" date="2005" name="Science">
        <authorList>
            <person name="Witte O.N."/>
            <person name="Kabarowski J.H."/>
            <person name="Xu Y."/>
            <person name="Le L.Q."/>
            <person name="Zhu K."/>
        </authorList>
    </citation>
    <scope>ERRATUM OF PUBMED:11474113</scope>
    <scope>RETRACTION NOTICE OF PUBMED:11474113</scope>
</reference>
<reference key="11">
    <citation type="journal article" date="2002" name="Arterioscler. Thromb. Vasc. Biol.">
        <title>Expression of G2A, a receptor for lysophosphatidylcholine, by macrophages in murine, rabbit, and human atherosclerotic plaques.</title>
        <authorList>
            <person name="Rikitake Y."/>
            <person name="Hirata K."/>
            <person name="Yamashita T."/>
            <person name="Iwai K."/>
            <person name="Kobayashi S."/>
            <person name="Itoh H."/>
            <person name="Ozaki M."/>
            <person name="Ejiri J."/>
            <person name="Shiomi M."/>
            <person name="Inoue N."/>
            <person name="Kawashima S."/>
            <person name="Yokoyama M."/>
        </authorList>
    </citation>
    <scope>TISSUE SPECIFICITY</scope>
</reference>
<reference key="12">
    <citation type="journal article" date="2003" name="J. Biol. Chem.">
        <title>The lysophospholipid receptor G2A activates a specific combination of G proteins and promotes apoptosis.</title>
        <authorList>
            <person name="Lin P."/>
            <person name="Ye R.D."/>
        </authorList>
    </citation>
    <scope>FUNCTION</scope>
</reference>
<name>GP132_HUMAN</name>
<dbReference type="EMBL" id="AF083955">
    <property type="protein sequence ID" value="AAD47380.1"/>
    <property type="molecule type" value="mRNA"/>
</dbReference>
<dbReference type="EMBL" id="AB465599">
    <property type="protein sequence ID" value="BAG84609.1"/>
    <property type="molecule type" value="mRNA"/>
</dbReference>
<dbReference type="EMBL" id="AB465600">
    <property type="protein sequence ID" value="BAG84610.1"/>
    <property type="molecule type" value="mRNA"/>
</dbReference>
<dbReference type="EMBL" id="EU432121">
    <property type="protein sequence ID" value="ABY87920.1"/>
    <property type="molecule type" value="mRNA"/>
</dbReference>
<dbReference type="EMBL" id="BT007257">
    <property type="protein sequence ID" value="AAP35921.1"/>
    <property type="molecule type" value="mRNA"/>
</dbReference>
<dbReference type="EMBL" id="AK292142">
    <property type="protein sequence ID" value="BAF84831.1"/>
    <property type="molecule type" value="mRNA"/>
</dbReference>
<dbReference type="EMBL" id="AK303654">
    <property type="protein sequence ID" value="BAG64656.1"/>
    <property type="molecule type" value="mRNA"/>
</dbReference>
<dbReference type="EMBL" id="AL512356">
    <property type="status" value="NOT_ANNOTATED_CDS"/>
    <property type="molecule type" value="Genomic_DNA"/>
</dbReference>
<dbReference type="EMBL" id="CH471061">
    <property type="protein sequence ID" value="EAW81898.1"/>
    <property type="molecule type" value="Genomic_DNA"/>
</dbReference>
<dbReference type="EMBL" id="BC004555">
    <property type="status" value="NOT_ANNOTATED_CDS"/>
    <property type="molecule type" value="mRNA"/>
</dbReference>
<dbReference type="EMBL" id="BC084546">
    <property type="protein sequence ID" value="AAH84546.1"/>
    <property type="molecule type" value="mRNA"/>
</dbReference>
<dbReference type="CCDS" id="CCDS61567.1">
    <molecule id="Q9UNW8-3"/>
</dbReference>
<dbReference type="CCDS" id="CCDS9997.1">
    <molecule id="Q9UNW8-1"/>
</dbReference>
<dbReference type="RefSeq" id="NP_001265623.1">
    <molecule id="Q9UNW8-1"/>
    <property type="nucleotide sequence ID" value="NM_001278694.2"/>
</dbReference>
<dbReference type="RefSeq" id="NP_001265624.1">
    <molecule id="Q9UNW8-3"/>
    <property type="nucleotide sequence ID" value="NM_001278695.2"/>
</dbReference>
<dbReference type="RefSeq" id="NP_001265625.1">
    <molecule id="Q9UNW8-2"/>
    <property type="nucleotide sequence ID" value="NM_001278696.2"/>
</dbReference>
<dbReference type="RefSeq" id="NP_037477.1">
    <molecule id="Q9UNW8-1"/>
    <property type="nucleotide sequence ID" value="NM_013345.4"/>
</dbReference>
<dbReference type="PDB" id="8HQE">
    <property type="method" value="EM"/>
    <property type="resolution" value="2.97 A"/>
    <property type="chains" value="R=1-380"/>
</dbReference>
<dbReference type="PDB" id="8HQM">
    <property type="method" value="EM"/>
    <property type="resolution" value="2.95 A"/>
    <property type="chains" value="R=1-380"/>
</dbReference>
<dbReference type="PDB" id="8HQN">
    <property type="method" value="EM"/>
    <property type="resolution" value="3.00 A"/>
    <property type="chains" value="R=1-380"/>
</dbReference>
<dbReference type="PDB" id="8HVI">
    <property type="method" value="EM"/>
    <property type="resolution" value="3.04 A"/>
    <property type="chains" value="R=1-380"/>
</dbReference>
<dbReference type="PDBsum" id="8HQE"/>
<dbReference type="PDBsum" id="8HQM"/>
<dbReference type="PDBsum" id="8HQN"/>
<dbReference type="PDBsum" id="8HVI"/>
<dbReference type="EMDB" id="EMD-34948"/>
<dbReference type="EMDB" id="EMD-34950"/>
<dbReference type="EMDB" id="EMD-34951"/>
<dbReference type="EMDB" id="EMD-35044"/>
<dbReference type="SMR" id="Q9UNW8"/>
<dbReference type="FunCoup" id="Q9UNW8">
    <property type="interactions" value="899"/>
</dbReference>
<dbReference type="STRING" id="9606.ENSP00000328818"/>
<dbReference type="ChEMBL" id="CHEMBL3085618"/>
<dbReference type="GuidetoPHARMACOLOGY" id="128"/>
<dbReference type="GlyCosmos" id="Q9UNW8">
    <property type="glycosylation" value="1 site, No reported glycans"/>
</dbReference>
<dbReference type="GlyGen" id="Q9UNW8">
    <property type="glycosylation" value="1 site, 1 N-linked glycan (1 site)"/>
</dbReference>
<dbReference type="iPTMnet" id="Q9UNW8"/>
<dbReference type="PhosphoSitePlus" id="Q9UNW8"/>
<dbReference type="BioMuta" id="GPR132"/>
<dbReference type="DMDM" id="37537754"/>
<dbReference type="MassIVE" id="Q9UNW8"/>
<dbReference type="PaxDb" id="9606-ENSP00000328818"/>
<dbReference type="PeptideAtlas" id="Q9UNW8"/>
<dbReference type="ProteomicsDB" id="85336">
    <molecule id="Q9UNW8-1"/>
</dbReference>
<dbReference type="ProteomicsDB" id="85337">
    <molecule id="Q9UNW8-2"/>
</dbReference>
<dbReference type="Antibodypedia" id="14925">
    <property type="antibodies" value="287 antibodies from 35 providers"/>
</dbReference>
<dbReference type="DNASU" id="29933"/>
<dbReference type="Ensembl" id="ENST00000329797.8">
    <molecule id="Q9UNW8-1"/>
    <property type="protein sequence ID" value="ENSP00000328818.3"/>
    <property type="gene ID" value="ENSG00000183484.12"/>
</dbReference>
<dbReference type="Ensembl" id="ENST00000392585.2">
    <molecule id="Q9UNW8-3"/>
    <property type="protein sequence ID" value="ENSP00000376364.2"/>
    <property type="gene ID" value="ENSG00000183484.12"/>
</dbReference>
<dbReference type="Ensembl" id="ENST00000539291.6">
    <molecule id="Q9UNW8-1"/>
    <property type="protein sequence ID" value="ENSP00000438094.2"/>
    <property type="gene ID" value="ENSG00000183484.12"/>
</dbReference>
<dbReference type="GeneID" id="29933"/>
<dbReference type="KEGG" id="hsa:29933"/>
<dbReference type="MANE-Select" id="ENST00000329797.8">
    <property type="protein sequence ID" value="ENSP00000328818.3"/>
    <property type="RefSeq nucleotide sequence ID" value="NM_013345.4"/>
    <property type="RefSeq protein sequence ID" value="NP_037477.1"/>
</dbReference>
<dbReference type="UCSC" id="uc001yqd.5">
    <molecule id="Q9UNW8-1"/>
    <property type="organism name" value="human"/>
</dbReference>
<dbReference type="AGR" id="HGNC:17482"/>
<dbReference type="CTD" id="29933"/>
<dbReference type="DisGeNET" id="29933"/>
<dbReference type="GeneCards" id="GPR132"/>
<dbReference type="HGNC" id="HGNC:17482">
    <property type="gene designation" value="GPR132"/>
</dbReference>
<dbReference type="HPA" id="ENSG00000183484">
    <property type="expression patterns" value="Tissue enhanced (bone marrow, lymphoid tissue)"/>
</dbReference>
<dbReference type="MIM" id="606167">
    <property type="type" value="gene"/>
</dbReference>
<dbReference type="neXtProt" id="NX_Q9UNW8"/>
<dbReference type="OpenTargets" id="ENSG00000183484"/>
<dbReference type="PharmGKB" id="PA134940832"/>
<dbReference type="VEuPathDB" id="HostDB:ENSG00000183484"/>
<dbReference type="eggNOG" id="ENOG502QQC1">
    <property type="taxonomic scope" value="Eukaryota"/>
</dbReference>
<dbReference type="GeneTree" id="ENSGT01030000234518"/>
<dbReference type="HOGENOM" id="CLU_009579_8_2_1"/>
<dbReference type="InParanoid" id="Q9UNW8"/>
<dbReference type="OMA" id="SLCELMY"/>
<dbReference type="OrthoDB" id="8953154at2759"/>
<dbReference type="PAN-GO" id="Q9UNW8">
    <property type="GO annotations" value="2 GO annotations based on evolutionary models"/>
</dbReference>
<dbReference type="PhylomeDB" id="Q9UNW8"/>
<dbReference type="TreeFam" id="TF331803"/>
<dbReference type="PathwayCommons" id="Q9UNW8"/>
<dbReference type="Reactome" id="R-HSA-373076">
    <property type="pathway name" value="Class A/1 (Rhodopsin-like receptors)"/>
</dbReference>
<dbReference type="Reactome" id="R-HSA-416476">
    <property type="pathway name" value="G alpha (q) signalling events"/>
</dbReference>
<dbReference type="SignaLink" id="Q9UNW8"/>
<dbReference type="SIGNOR" id="Q9UNW8"/>
<dbReference type="BioGRID-ORCS" id="29933">
    <property type="hits" value="11 hits in 1155 CRISPR screens"/>
</dbReference>
<dbReference type="GeneWiki" id="GPR132"/>
<dbReference type="GenomeRNAi" id="29933"/>
<dbReference type="Pharos" id="Q9UNW8">
    <property type="development level" value="Tchem"/>
</dbReference>
<dbReference type="PRO" id="PR:Q9UNW8"/>
<dbReference type="Proteomes" id="UP000005640">
    <property type="component" value="Chromosome 14"/>
</dbReference>
<dbReference type="RNAct" id="Q9UNW8">
    <property type="molecule type" value="protein"/>
</dbReference>
<dbReference type="Bgee" id="ENSG00000183484">
    <property type="expression patterns" value="Expressed in granulocyte and 98 other cell types or tissues"/>
</dbReference>
<dbReference type="ExpressionAtlas" id="Q9UNW8">
    <property type="expression patterns" value="baseline and differential"/>
</dbReference>
<dbReference type="GO" id="GO:0005886">
    <property type="term" value="C:plasma membrane"/>
    <property type="evidence" value="ECO:0000304"/>
    <property type="project" value="Reactome"/>
</dbReference>
<dbReference type="GO" id="GO:0004930">
    <property type="term" value="F:G protein-coupled receptor activity"/>
    <property type="evidence" value="ECO:0007669"/>
    <property type="project" value="UniProtKB-KW"/>
</dbReference>
<dbReference type="GO" id="GO:0000082">
    <property type="term" value="P:G1/S transition of mitotic cell cycle"/>
    <property type="evidence" value="ECO:0000318"/>
    <property type="project" value="GO_Central"/>
</dbReference>
<dbReference type="GO" id="GO:0010972">
    <property type="term" value="P:negative regulation of G2/M transition of mitotic cell cycle"/>
    <property type="evidence" value="ECO:0000318"/>
    <property type="project" value="GO_Central"/>
</dbReference>
<dbReference type="CDD" id="cd15364">
    <property type="entry name" value="7tmA_GPR132_G2A"/>
    <property type="match status" value="1"/>
</dbReference>
<dbReference type="FunFam" id="1.20.1070.10:FF:000065">
    <property type="entry name" value="G-protein coupled receptor 4"/>
    <property type="match status" value="1"/>
</dbReference>
<dbReference type="Gene3D" id="1.20.1070.10">
    <property type="entry name" value="Rhodopsin 7-helix transmembrane proteins"/>
    <property type="match status" value="1"/>
</dbReference>
<dbReference type="InterPro" id="IPR005388">
    <property type="entry name" value="G2A_lysphc_rcpt"/>
</dbReference>
<dbReference type="InterPro" id="IPR000276">
    <property type="entry name" value="GPCR_Rhodpsn"/>
</dbReference>
<dbReference type="InterPro" id="IPR017452">
    <property type="entry name" value="GPCR_Rhodpsn_7TM"/>
</dbReference>
<dbReference type="PANTHER" id="PTHR24234:SF7">
    <property type="entry name" value="G-PROTEIN COUPLED RECEPTOR 132-RELATED"/>
    <property type="match status" value="1"/>
</dbReference>
<dbReference type="PANTHER" id="PTHR24234">
    <property type="entry name" value="LYSOPHOSPHATIDIC ACID RECEPTOR 5/SPHINGOSYLPHOSPHORYLCHOLINE RECEPTOR"/>
    <property type="match status" value="1"/>
</dbReference>
<dbReference type="Pfam" id="PF00001">
    <property type="entry name" value="7tm_1"/>
    <property type="match status" value="1"/>
</dbReference>
<dbReference type="PRINTS" id="PR01563">
    <property type="entry name" value="G2ARECEPTOR"/>
</dbReference>
<dbReference type="PRINTS" id="PR00237">
    <property type="entry name" value="GPCRRHODOPSN"/>
</dbReference>
<dbReference type="SUPFAM" id="SSF81321">
    <property type="entry name" value="Family A G protein-coupled receptor-like"/>
    <property type="match status" value="1"/>
</dbReference>
<dbReference type="PROSITE" id="PS00237">
    <property type="entry name" value="G_PROTEIN_RECEP_F1_1"/>
    <property type="match status" value="1"/>
</dbReference>
<dbReference type="PROSITE" id="PS50262">
    <property type="entry name" value="G_PROTEIN_RECEP_F1_2"/>
    <property type="match status" value="1"/>
</dbReference>
<feature type="chain" id="PRO_0000069461" description="Probable G-protein coupled receptor 132">
    <location>
        <begin position="1"/>
        <end position="380"/>
    </location>
</feature>
<feature type="topological domain" description="Extracellular" evidence="2">
    <location>
        <begin position="1"/>
        <end position="45"/>
    </location>
</feature>
<feature type="transmembrane region" description="Helical; Name=1" evidence="2">
    <location>
        <begin position="46"/>
        <end position="68"/>
    </location>
</feature>
<feature type="topological domain" description="Cytoplasmic" evidence="2">
    <location>
        <begin position="69"/>
        <end position="79"/>
    </location>
</feature>
<feature type="transmembrane region" description="Helical; Name=2" evidence="2">
    <location>
        <begin position="80"/>
        <end position="102"/>
    </location>
</feature>
<feature type="topological domain" description="Extracellular" evidence="2">
    <location>
        <begin position="103"/>
        <end position="116"/>
    </location>
</feature>
<feature type="transmembrane region" description="Helical; Name=3" evidence="2">
    <location>
        <begin position="117"/>
        <end position="138"/>
    </location>
</feature>
<feature type="topological domain" description="Cytoplasmic" evidence="2">
    <location>
        <begin position="139"/>
        <end position="158"/>
    </location>
</feature>
<feature type="transmembrane region" description="Helical; Name=4" evidence="2">
    <location>
        <begin position="159"/>
        <end position="178"/>
    </location>
</feature>
<feature type="topological domain" description="Extracellular" evidence="2">
    <location>
        <begin position="179"/>
        <end position="197"/>
    </location>
</feature>
<feature type="transmembrane region" description="Helical; Name=5" evidence="2">
    <location>
        <begin position="198"/>
        <end position="220"/>
    </location>
</feature>
<feature type="topological domain" description="Cytoplasmic" evidence="2">
    <location>
        <begin position="221"/>
        <end position="246"/>
    </location>
</feature>
<feature type="transmembrane region" description="Helical; Name=6" evidence="2">
    <location>
        <begin position="247"/>
        <end position="269"/>
    </location>
</feature>
<feature type="topological domain" description="Extracellular" evidence="2">
    <location>
        <begin position="270"/>
        <end position="288"/>
    </location>
</feature>
<feature type="transmembrane region" description="Helical; Name=7" evidence="2">
    <location>
        <begin position="289"/>
        <end position="311"/>
    </location>
</feature>
<feature type="topological domain" description="Cytoplasmic" evidence="2">
    <location>
        <begin position="312"/>
        <end position="380"/>
    </location>
</feature>
<feature type="glycosylation site" description="N-linked (GlcNAc...) asparagine" evidence="2">
    <location>
        <position position="35"/>
    </location>
</feature>
<feature type="disulfide bond" evidence="3">
    <location>
        <begin position="115"/>
        <end position="186"/>
    </location>
</feature>
<feature type="splice variant" id="VSP_008404" description="In isoform 2." evidence="9 11">
    <location>
        <begin position="1"/>
        <end position="188"/>
    </location>
</feature>
<feature type="splice variant" id="VSP_054592" description="In isoform 3." evidence="8 10">
    <original>MCPMLLKNGYN</original>
    <variation>MP</variation>
    <location>
        <begin position="1"/>
        <end position="11"/>
    </location>
</feature>
<feature type="mutagenesis site" description="No change in basal activity." evidence="6">
    <original>K</original>
    <variation>A</variation>
    <location>
        <position position="7"/>
    </location>
</feature>
<feature type="mutagenesis site" description="Decreased IP1 accumulation at any pH." evidence="6">
    <original>K</original>
    <variation>A</variation>
    <location>
        <position position="31"/>
    </location>
</feature>
<feature type="mutagenesis site" description="Decreased basal activity at alkaline pH and loss of proton-sensing activity at low pH." evidence="6">
    <original>R</original>
    <variation>A</variation>
    <location>
        <position position="42"/>
    </location>
</feature>
<feature type="helix" evidence="15">
    <location>
        <begin position="38"/>
        <end position="71"/>
    </location>
</feature>
<feature type="helix" evidence="15">
    <location>
        <begin position="76"/>
        <end position="86"/>
    </location>
</feature>
<feature type="turn" evidence="15">
    <location>
        <begin position="90"/>
        <end position="94"/>
    </location>
</feature>
<feature type="helix" evidence="15">
    <location>
        <begin position="95"/>
        <end position="101"/>
    </location>
</feature>
<feature type="helix" evidence="15">
    <location>
        <begin position="113"/>
        <end position="144"/>
    </location>
</feature>
<feature type="helix" evidence="15">
    <location>
        <begin position="147"/>
        <end position="153"/>
    </location>
</feature>
<feature type="helix" evidence="15">
    <location>
        <begin position="156"/>
        <end position="179"/>
    </location>
</feature>
<feature type="turn" evidence="14">
    <location>
        <begin position="190"/>
        <end position="192"/>
    </location>
</feature>
<feature type="helix" evidence="15">
    <location>
        <begin position="195"/>
        <end position="207"/>
    </location>
</feature>
<feature type="helix" evidence="15">
    <location>
        <begin position="209"/>
        <end position="227"/>
    </location>
</feature>
<feature type="strand" evidence="15">
    <location>
        <begin position="230"/>
        <end position="232"/>
    </location>
</feature>
<feature type="helix" evidence="15">
    <location>
        <begin position="234"/>
        <end position="271"/>
    </location>
</feature>
<feature type="helix" evidence="15">
    <location>
        <begin position="279"/>
        <end position="311"/>
    </location>
</feature>
<feature type="helix" evidence="15">
    <location>
        <begin position="313"/>
        <end position="330"/>
    </location>
</feature>
<feature type="helix" evidence="15">
    <location>
        <begin position="335"/>
        <end position="345"/>
    </location>
</feature>
<gene>
    <name type="primary">GPR132</name>
    <name type="synonym">G2A</name>
</gene>
<accession>Q9UNW8</accession>
<accession>A8K7X7</accession>
<accession>B4E144</accession>
<accession>Q9BSU2</accession>
<keyword id="KW-0002">3D-structure</keyword>
<keyword id="KW-0025">Alternative splicing</keyword>
<keyword id="KW-1003">Cell membrane</keyword>
<keyword id="KW-1015">Disulfide bond</keyword>
<keyword id="KW-0297">G-protein coupled receptor</keyword>
<keyword id="KW-0325">Glycoprotein</keyword>
<keyword id="KW-0472">Membrane</keyword>
<keyword id="KW-1267">Proteomics identification</keyword>
<keyword id="KW-0675">Receptor</keyword>
<keyword id="KW-1185">Reference proteome</keyword>
<keyword id="KW-0346">Stress response</keyword>
<keyword id="KW-0807">Transducer</keyword>
<keyword id="KW-0812">Transmembrane</keyword>
<keyword id="KW-1133">Transmembrane helix</keyword>
<sequence>MCPMLLKNGYNGNATPVTTTAPWASLGLSAKTCNNVSFEESRIVLVVVYSAVCTLGVPANCLTAWLALLQVLQGNVLAVYLLCLALCELLYTGTLPLWVIYIRNQHRWTLGLLACKVTAYIFFCNIYVSILFLCCISCDRFVAVVYALESRGRRRRRTAILISACIFILVGIVHYPVFQTEDKETCFDMLQMDSRIAGYYYARFTVGFAIPLSIIAFTNHRIFRSIKQSMGLSAAQKAKVKHSAIAVVVIFLVCFAPYHLVLLVKAAAFSYYRGDRNAMCGLEERLYTASVVFLCLSTVNGVADPIIYVLATDHSRQEVSRIHKGWKEWSMKTDVTRLTHSRDTEELQSPVALADHYTFSRPVHPPGSPCPAKRLIEESC</sequence>